<accession>P51246</accession>
<name>ATPH_PORPU</name>
<comment type="function">
    <text evidence="1">F(1)F(0) ATP synthase produces ATP from ADP in the presence of a proton or sodium gradient. F-type ATPases consist of two structural domains, F(1) containing the extramembraneous catalytic core and F(0) containing the membrane proton channel, linked together by a central stalk and a peripheral stalk. During catalysis, ATP synthesis in the catalytic domain of F(1) is coupled via a rotary mechanism of the central stalk subunits to proton translocation.</text>
</comment>
<comment type="function">
    <text evidence="1">Key component of the F(0) channel; it plays a direct role in translocation across the membrane. A homomeric c-ring of between 10-14 subunits forms the central stalk rotor element with the F(1) delta and epsilon subunits.</text>
</comment>
<comment type="subunit">
    <text evidence="1">F-type ATPases have 2 components, F(1) - the catalytic core - and F(0) - the membrane proton channel. F(1) has five subunits: alpha(3), beta(3), gamma(1), delta(1), epsilon(1). F(0) has four main subunits: a(1), b(1), b'(1) and c(10-14). The alpha and beta chains form an alternating ring which encloses part of the gamma chain. F(1) is attached to F(0) by a central stalk formed by the gamma and epsilon chains, while a peripheral stalk is formed by the delta, b and b' chains.</text>
</comment>
<comment type="subcellular location">
    <subcellularLocation>
        <location evidence="1">Plastid</location>
        <location evidence="1">Chloroplast thylakoid membrane</location>
        <topology evidence="1">Multi-pass membrane protein</topology>
    </subcellularLocation>
</comment>
<comment type="miscellaneous">
    <text>In plastids the F-type ATPase is also known as CF(1)CF(0).</text>
</comment>
<comment type="similarity">
    <text evidence="1">Belongs to the ATPase C chain family.</text>
</comment>
<geneLocation type="chloroplast"/>
<keyword id="KW-0066">ATP synthesis</keyword>
<keyword id="KW-0138">CF(0)</keyword>
<keyword id="KW-0150">Chloroplast</keyword>
<keyword id="KW-0375">Hydrogen ion transport</keyword>
<keyword id="KW-0406">Ion transport</keyword>
<keyword id="KW-0446">Lipid-binding</keyword>
<keyword id="KW-0472">Membrane</keyword>
<keyword id="KW-0934">Plastid</keyword>
<keyword id="KW-0793">Thylakoid</keyword>
<keyword id="KW-0812">Transmembrane</keyword>
<keyword id="KW-1133">Transmembrane helix</keyword>
<keyword id="KW-0813">Transport</keyword>
<evidence type="ECO:0000255" key="1">
    <source>
        <dbReference type="HAMAP-Rule" id="MF_01396"/>
    </source>
</evidence>
<reference key="1">
    <citation type="journal article" date="1995" name="Plant Mol. Biol. Rep.">
        <title>Complete nucleotide sequence of the Porphyra purpurea chloroplast genome.</title>
        <authorList>
            <person name="Reith M.E."/>
            <person name="Munholland J."/>
        </authorList>
    </citation>
    <scope>NUCLEOTIDE SEQUENCE [LARGE SCALE GENOMIC DNA]</scope>
    <source>
        <strain>Avonport</strain>
    </source>
</reference>
<gene>
    <name evidence="1" type="primary">atpH</name>
</gene>
<dbReference type="EMBL" id="U38804">
    <property type="protein sequence ID" value="AAC08132.1"/>
    <property type="molecule type" value="Genomic_DNA"/>
</dbReference>
<dbReference type="PIR" id="S73167">
    <property type="entry name" value="S73167"/>
</dbReference>
<dbReference type="RefSeq" id="NP_053856.1">
    <property type="nucleotide sequence ID" value="NC_000925.1"/>
</dbReference>
<dbReference type="SMR" id="P51246"/>
<dbReference type="GeneID" id="809875"/>
<dbReference type="GO" id="GO:0009535">
    <property type="term" value="C:chloroplast thylakoid membrane"/>
    <property type="evidence" value="ECO:0007669"/>
    <property type="project" value="UniProtKB-SubCell"/>
</dbReference>
<dbReference type="GO" id="GO:0045259">
    <property type="term" value="C:proton-transporting ATP synthase complex"/>
    <property type="evidence" value="ECO:0007669"/>
    <property type="project" value="UniProtKB-KW"/>
</dbReference>
<dbReference type="GO" id="GO:0033177">
    <property type="term" value="C:proton-transporting two-sector ATPase complex, proton-transporting domain"/>
    <property type="evidence" value="ECO:0007669"/>
    <property type="project" value="InterPro"/>
</dbReference>
<dbReference type="GO" id="GO:0008289">
    <property type="term" value="F:lipid binding"/>
    <property type="evidence" value="ECO:0007669"/>
    <property type="project" value="UniProtKB-KW"/>
</dbReference>
<dbReference type="GO" id="GO:0046933">
    <property type="term" value="F:proton-transporting ATP synthase activity, rotational mechanism"/>
    <property type="evidence" value="ECO:0007669"/>
    <property type="project" value="UniProtKB-UniRule"/>
</dbReference>
<dbReference type="CDD" id="cd18183">
    <property type="entry name" value="ATP-synt_Fo_c_ATPH"/>
    <property type="match status" value="1"/>
</dbReference>
<dbReference type="FunFam" id="1.20.20.10:FF:000001">
    <property type="entry name" value="ATP synthase subunit c, chloroplastic"/>
    <property type="match status" value="1"/>
</dbReference>
<dbReference type="Gene3D" id="1.20.20.10">
    <property type="entry name" value="F1F0 ATP synthase subunit C"/>
    <property type="match status" value="1"/>
</dbReference>
<dbReference type="HAMAP" id="MF_01396">
    <property type="entry name" value="ATP_synth_c_bact"/>
    <property type="match status" value="1"/>
</dbReference>
<dbReference type="InterPro" id="IPR005953">
    <property type="entry name" value="ATP_synth_csu_bac/chlpt"/>
</dbReference>
<dbReference type="InterPro" id="IPR000454">
    <property type="entry name" value="ATP_synth_F0_csu"/>
</dbReference>
<dbReference type="InterPro" id="IPR020537">
    <property type="entry name" value="ATP_synth_F0_csu_DDCD_BS"/>
</dbReference>
<dbReference type="InterPro" id="IPR038662">
    <property type="entry name" value="ATP_synth_F0_csu_sf"/>
</dbReference>
<dbReference type="InterPro" id="IPR002379">
    <property type="entry name" value="ATPase_proteolipid_c-like_dom"/>
</dbReference>
<dbReference type="InterPro" id="IPR035921">
    <property type="entry name" value="F/V-ATP_Csub_sf"/>
</dbReference>
<dbReference type="NCBIfam" id="TIGR01260">
    <property type="entry name" value="ATP_synt_c"/>
    <property type="match status" value="1"/>
</dbReference>
<dbReference type="NCBIfam" id="NF005608">
    <property type="entry name" value="PRK07354.1"/>
    <property type="match status" value="1"/>
</dbReference>
<dbReference type="PANTHER" id="PTHR10031">
    <property type="entry name" value="ATP SYNTHASE LIPID-BINDING PROTEIN, MITOCHONDRIAL"/>
    <property type="match status" value="1"/>
</dbReference>
<dbReference type="PANTHER" id="PTHR10031:SF0">
    <property type="entry name" value="ATPASE PROTEIN 9"/>
    <property type="match status" value="1"/>
</dbReference>
<dbReference type="Pfam" id="PF00137">
    <property type="entry name" value="ATP-synt_C"/>
    <property type="match status" value="1"/>
</dbReference>
<dbReference type="PRINTS" id="PR00124">
    <property type="entry name" value="ATPASEC"/>
</dbReference>
<dbReference type="SUPFAM" id="SSF81333">
    <property type="entry name" value="F1F0 ATP synthase subunit C"/>
    <property type="match status" value="1"/>
</dbReference>
<dbReference type="PROSITE" id="PS00605">
    <property type="entry name" value="ATPASE_C"/>
    <property type="match status" value="1"/>
</dbReference>
<feature type="chain" id="PRO_0000112203" description="ATP synthase subunit c, chloroplastic">
    <location>
        <begin position="1"/>
        <end position="82"/>
    </location>
</feature>
<feature type="transmembrane region" description="Helical" evidence="1">
    <location>
        <begin position="7"/>
        <end position="27"/>
    </location>
</feature>
<feature type="transmembrane region" description="Helical" evidence="1">
    <location>
        <begin position="57"/>
        <end position="77"/>
    </location>
</feature>
<feature type="site" description="Reversibly protonated during proton transport" evidence="1">
    <location>
        <position position="61"/>
    </location>
</feature>
<organism>
    <name type="scientific">Porphyra purpurea</name>
    <name type="common">Red seaweed</name>
    <name type="synonym">Ulva purpurea</name>
    <dbReference type="NCBI Taxonomy" id="2787"/>
    <lineage>
        <taxon>Eukaryota</taxon>
        <taxon>Rhodophyta</taxon>
        <taxon>Bangiophyceae</taxon>
        <taxon>Bangiales</taxon>
        <taxon>Bangiaceae</taxon>
        <taxon>Porphyra</taxon>
    </lineage>
</organism>
<proteinExistence type="inferred from homology"/>
<sequence>MDSIVSAASVIAAGLAVGLAAIGPGIGQGSAAANAVEGIARQPEVEGKIRGTLLLSLAFMESLTIYGLVVALSLLFANPYVG</sequence>
<protein>
    <recommendedName>
        <fullName evidence="1">ATP synthase subunit c, chloroplastic</fullName>
    </recommendedName>
    <alternativeName>
        <fullName evidence="1">ATP synthase F(0) sector subunit c</fullName>
    </alternativeName>
    <alternativeName>
        <fullName evidence="1">ATPase subunit III</fullName>
    </alternativeName>
    <alternativeName>
        <fullName evidence="1">F-type ATPase subunit c</fullName>
        <shortName evidence="1">F-ATPase subunit c</shortName>
    </alternativeName>
    <alternativeName>
        <fullName evidence="1">Lipid-binding protein</fullName>
    </alternativeName>
</protein>